<accession>A6ZZG0</accession>
<organism>
    <name type="scientific">Saccharomyces cerevisiae (strain YJM789)</name>
    <name type="common">Baker's yeast</name>
    <dbReference type="NCBI Taxonomy" id="307796"/>
    <lineage>
        <taxon>Eukaryota</taxon>
        <taxon>Fungi</taxon>
        <taxon>Dikarya</taxon>
        <taxon>Ascomycota</taxon>
        <taxon>Saccharomycotina</taxon>
        <taxon>Saccharomycetes</taxon>
        <taxon>Saccharomycetales</taxon>
        <taxon>Saccharomycetaceae</taxon>
        <taxon>Saccharomyces</taxon>
    </lineage>
</organism>
<comment type="function">
    <text evidence="1">Component of the outer cell wall layer. Required for stability of the cell wall and for optimal growth. Required for resistance against several antifungal and cell wall-perturbing agents and for tolerance to heat shock (By similarity).</text>
</comment>
<comment type="subcellular location">
    <subcellularLocation>
        <location evidence="1">Secreted</location>
        <location evidence="1">Cell wall</location>
    </subcellularLocation>
    <text evidence="1">Covalently attached to the cell wall.</text>
</comment>
<comment type="domain">
    <text evidence="1">The PIR1/2/3 repeats are required for the covalent linkage to the cell wall (By similarity). Their number varies among different strains of S.cerevisiae.</text>
</comment>
<comment type="PTM">
    <text evidence="1">Covalently linked to beta-1,3-glucan of the inner cell wall layer via an alkali-sensitive ester linkage between the gamma-carboxyl group of glutamic acids, arising from specific glutamines within the PIR1/2/3 repeats, and hydroxyl groups of glucoses of beta-1,3-glucan chains.</text>
</comment>
<comment type="PTM">
    <text evidence="1">O-glycosylated. Extensively O-mannosylated (By similarity).</text>
</comment>
<comment type="similarity">
    <text evidence="2">Belongs to the PIR protein family.</text>
</comment>
<gene>
    <name type="primary">PIR1</name>
    <name type="ORF">SCY_3220</name>
</gene>
<name>PIR1_YEAS7</name>
<feature type="signal peptide" evidence="1">
    <location>
        <begin position="1"/>
        <end position="18"/>
    </location>
</feature>
<feature type="propeptide" id="PRO_0000377604" evidence="1">
    <location>
        <begin position="19"/>
        <end position="63"/>
    </location>
</feature>
<feature type="chain" id="PRO_0000377605" description="Cell wall mannoprotein PIR1">
    <location>
        <begin position="64"/>
        <end position="341"/>
    </location>
</feature>
<feature type="repeat" description="PIR1/2/3 1">
    <location>
        <begin position="64"/>
        <end position="82"/>
    </location>
</feature>
<feature type="repeat" description="PIR1/2/3 2">
    <location>
        <begin position="83"/>
        <end position="101"/>
    </location>
</feature>
<feature type="repeat" description="PIR1/2/3 3">
    <location>
        <begin position="102"/>
        <end position="120"/>
    </location>
</feature>
<feature type="repeat" description="PIR1/2/3 4">
    <location>
        <begin position="126"/>
        <end position="144"/>
    </location>
</feature>
<feature type="repeat" description="PIR1/2/3 5">
    <location>
        <begin position="145"/>
        <end position="163"/>
    </location>
</feature>
<feature type="repeat" description="PIR1/2/3 6">
    <location>
        <begin position="164"/>
        <end position="182"/>
    </location>
</feature>
<feature type="repeat" description="PIR1/2/3 7">
    <location>
        <begin position="183"/>
        <end position="201"/>
    </location>
</feature>
<feature type="repeat" description="PIR1/2/3 8">
    <location>
        <begin position="202"/>
        <end position="220"/>
    </location>
</feature>
<feature type="site" description="Cleavage; by KEX2" evidence="1">
    <location>
        <begin position="63"/>
        <end position="64"/>
    </location>
</feature>
<feature type="site" description="Covalent attachment to cell wall glycan" evidence="1">
    <location>
        <position position="74"/>
    </location>
</feature>
<feature type="site" description="Covalent attachment to cell wall glycan" evidence="1">
    <location>
        <position position="93"/>
    </location>
</feature>
<feature type="site" description="Covalent attachment to cell wall glycan" evidence="1">
    <location>
        <position position="112"/>
    </location>
</feature>
<feature type="site" description="Covalent attachment to cell wall glycan" evidence="1">
    <location>
        <position position="136"/>
    </location>
</feature>
<feature type="site" description="Covalent attachment to cell wall glycan" evidence="1">
    <location>
        <position position="155"/>
    </location>
</feature>
<feature type="site" description="Covalent attachment to cell wall glycan" evidence="1">
    <location>
        <position position="174"/>
    </location>
</feature>
<feature type="site" description="Covalent attachment to cell wall glycan" evidence="1">
    <location>
        <position position="193"/>
    </location>
</feature>
<feature type="site" description="Covalent attachment to cell wall glycan" evidence="1">
    <location>
        <position position="212"/>
    </location>
</feature>
<proteinExistence type="inferred from homology"/>
<reference key="1">
    <citation type="journal article" date="2007" name="Proc. Natl. Acad. Sci. U.S.A.">
        <title>Genome sequencing and comparative analysis of Saccharomyces cerevisiae strain YJM789.</title>
        <authorList>
            <person name="Wei W."/>
            <person name="McCusker J.H."/>
            <person name="Hyman R.W."/>
            <person name="Jones T."/>
            <person name="Ning Y."/>
            <person name="Cao Z."/>
            <person name="Gu Z."/>
            <person name="Bruno D."/>
            <person name="Miranda M."/>
            <person name="Nguyen M."/>
            <person name="Wilhelmy J."/>
            <person name="Komp C."/>
            <person name="Tamse R."/>
            <person name="Wang X."/>
            <person name="Jia P."/>
            <person name="Luedi P."/>
            <person name="Oefner P.J."/>
            <person name="David L."/>
            <person name="Dietrich F.S."/>
            <person name="Li Y."/>
            <person name="Davis R.W."/>
            <person name="Steinmetz L.M."/>
        </authorList>
    </citation>
    <scope>NUCLEOTIDE SEQUENCE [LARGE SCALE GENOMIC DNA]</scope>
    <source>
        <strain>YJM789</strain>
    </source>
</reference>
<sequence length="341" mass="34608">MQYKKSLVASALVATSLAAYAPKDPWSTLTPSATYKGGITDYSSTFGIAVEPIATTASSKAKRAAAISQIGDGQIQATTKTTAAAVSQIGDGQIQATTKTKAAAVSQIGDGQIQATTKTTSAKTTAAAVSQIGDGQIQATTKTKAAAVSQIGDGQIQATTKTTAAAVSQIGDGQIQATTKTTAAAVSQIGDGQIQATTNTTVAPVSQITDGQIQATTLTSATIIPSPAPAPITNGTDPVTAETCKSSGTLEMNLKGGILTDGKGRIGSIVANRQFQFDGPPPQAGAIYAAGWSITPEGNLAIGDQDTFYQCLSGNFYNLYDEHIGTQCNAVHLQAIDLVNC</sequence>
<dbReference type="EMBL" id="AAFW02000151">
    <property type="protein sequence ID" value="EDN60008.1"/>
    <property type="molecule type" value="Genomic_DNA"/>
</dbReference>
<dbReference type="HOGENOM" id="CLU_039662_0_0_1"/>
<dbReference type="Proteomes" id="UP000007060">
    <property type="component" value="Unassembled WGS sequence"/>
</dbReference>
<dbReference type="GO" id="GO:0005576">
    <property type="term" value="C:extracellular region"/>
    <property type="evidence" value="ECO:0007669"/>
    <property type="project" value="UniProtKB-KW"/>
</dbReference>
<dbReference type="GO" id="GO:0009277">
    <property type="term" value="C:fungal-type cell wall"/>
    <property type="evidence" value="ECO:0007669"/>
    <property type="project" value="TreeGrafter"/>
</dbReference>
<dbReference type="GO" id="GO:0005199">
    <property type="term" value="F:structural constituent of cell wall"/>
    <property type="evidence" value="ECO:0007669"/>
    <property type="project" value="InterPro"/>
</dbReference>
<dbReference type="GO" id="GO:0031505">
    <property type="term" value="P:fungal-type cell wall organization"/>
    <property type="evidence" value="ECO:0007669"/>
    <property type="project" value="UniProtKB-ARBA"/>
</dbReference>
<dbReference type="InterPro" id="IPR054508">
    <property type="entry name" value="PIR1-like_C"/>
</dbReference>
<dbReference type="InterPro" id="IPR051153">
    <property type="entry name" value="Yeast_CWMannoprotein_PIR"/>
</dbReference>
<dbReference type="InterPro" id="IPR000420">
    <property type="entry name" value="Yeast_PIR_rpt"/>
</dbReference>
<dbReference type="PANTHER" id="PTHR47254">
    <property type="entry name" value="CELL WALL MANNOPROTEIN CIS3-RELATED"/>
    <property type="match status" value="1"/>
</dbReference>
<dbReference type="PANTHER" id="PTHR47254:SF1">
    <property type="entry name" value="CELL WALL MANNOPROTEIN CIS3-RELATED"/>
    <property type="match status" value="1"/>
</dbReference>
<dbReference type="Pfam" id="PF00399">
    <property type="entry name" value="PIR"/>
    <property type="match status" value="8"/>
</dbReference>
<dbReference type="Pfam" id="PF22799">
    <property type="entry name" value="PIR1-like_C"/>
    <property type="match status" value="1"/>
</dbReference>
<dbReference type="PROSITE" id="PS00929">
    <property type="entry name" value="PIR_REPEAT_1"/>
    <property type="match status" value="8"/>
</dbReference>
<dbReference type="PROSITE" id="PS50256">
    <property type="entry name" value="PIR_REPEAT_2"/>
    <property type="match status" value="8"/>
</dbReference>
<keyword id="KW-0134">Cell wall</keyword>
<keyword id="KW-0961">Cell wall biogenesis/degradation</keyword>
<keyword id="KW-0165">Cleavage on pair of basic residues</keyword>
<keyword id="KW-0325">Glycoprotein</keyword>
<keyword id="KW-0677">Repeat</keyword>
<keyword id="KW-0964">Secreted</keyword>
<keyword id="KW-0732">Signal</keyword>
<evidence type="ECO:0000250" key="1"/>
<evidence type="ECO:0000305" key="2"/>
<protein>
    <recommendedName>
        <fullName>Cell wall mannoprotein PIR1</fullName>
    </recommendedName>
    <alternativeName>
        <fullName>Covalently-linked cell wall protein 6</fullName>
    </alternativeName>
    <alternativeName>
        <fullName>Protein with internal repeats 1</fullName>
    </alternativeName>
</protein>